<reference key="1">
    <citation type="journal article" date="2009" name="PLoS Genet.">
        <title>Organised genome dynamics in the Escherichia coli species results in highly diverse adaptive paths.</title>
        <authorList>
            <person name="Touchon M."/>
            <person name="Hoede C."/>
            <person name="Tenaillon O."/>
            <person name="Barbe V."/>
            <person name="Baeriswyl S."/>
            <person name="Bidet P."/>
            <person name="Bingen E."/>
            <person name="Bonacorsi S."/>
            <person name="Bouchier C."/>
            <person name="Bouvet O."/>
            <person name="Calteau A."/>
            <person name="Chiapello H."/>
            <person name="Clermont O."/>
            <person name="Cruveiller S."/>
            <person name="Danchin A."/>
            <person name="Diard M."/>
            <person name="Dossat C."/>
            <person name="Karoui M.E."/>
            <person name="Frapy E."/>
            <person name="Garry L."/>
            <person name="Ghigo J.M."/>
            <person name="Gilles A.M."/>
            <person name="Johnson J."/>
            <person name="Le Bouguenec C."/>
            <person name="Lescat M."/>
            <person name="Mangenot S."/>
            <person name="Martinez-Jehanne V."/>
            <person name="Matic I."/>
            <person name="Nassif X."/>
            <person name="Oztas S."/>
            <person name="Petit M.A."/>
            <person name="Pichon C."/>
            <person name="Rouy Z."/>
            <person name="Ruf C.S."/>
            <person name="Schneider D."/>
            <person name="Tourret J."/>
            <person name="Vacherie B."/>
            <person name="Vallenet D."/>
            <person name="Medigue C."/>
            <person name="Rocha E.P.C."/>
            <person name="Denamur E."/>
        </authorList>
    </citation>
    <scope>NUCLEOTIDE SEQUENCE [LARGE SCALE GENOMIC DNA]</scope>
    <source>
        <strain>IAI1</strain>
    </source>
</reference>
<organism>
    <name type="scientific">Escherichia coli O8 (strain IAI1)</name>
    <dbReference type="NCBI Taxonomy" id="585034"/>
    <lineage>
        <taxon>Bacteria</taxon>
        <taxon>Pseudomonadati</taxon>
        <taxon>Pseudomonadota</taxon>
        <taxon>Gammaproteobacteria</taxon>
        <taxon>Enterobacterales</taxon>
        <taxon>Enterobacteriaceae</taxon>
        <taxon>Escherichia</taxon>
    </lineage>
</organism>
<accession>B7M8I9</accession>
<dbReference type="EC" id="2.1.1.223" evidence="1"/>
<dbReference type="EMBL" id="CU928160">
    <property type="protein sequence ID" value="CAQ99525.1"/>
    <property type="molecule type" value="Genomic_DNA"/>
</dbReference>
<dbReference type="SMR" id="B7M8I9"/>
<dbReference type="KEGG" id="ecr:ECIAI1_2689"/>
<dbReference type="HOGENOM" id="CLU_061983_0_0_6"/>
<dbReference type="GO" id="GO:0005737">
    <property type="term" value="C:cytoplasm"/>
    <property type="evidence" value="ECO:0007669"/>
    <property type="project" value="UniProtKB-SubCell"/>
</dbReference>
<dbReference type="GO" id="GO:0003676">
    <property type="term" value="F:nucleic acid binding"/>
    <property type="evidence" value="ECO:0007669"/>
    <property type="project" value="InterPro"/>
</dbReference>
<dbReference type="GO" id="GO:0016430">
    <property type="term" value="F:tRNA (adenine-N6)-methyltransferase activity"/>
    <property type="evidence" value="ECO:0007669"/>
    <property type="project" value="UniProtKB-UniRule"/>
</dbReference>
<dbReference type="GO" id="GO:0032259">
    <property type="term" value="P:methylation"/>
    <property type="evidence" value="ECO:0007669"/>
    <property type="project" value="UniProtKB-KW"/>
</dbReference>
<dbReference type="GO" id="GO:0008033">
    <property type="term" value="P:tRNA processing"/>
    <property type="evidence" value="ECO:0007669"/>
    <property type="project" value="UniProtKB-UniRule"/>
</dbReference>
<dbReference type="CDD" id="cd02440">
    <property type="entry name" value="AdoMet_MTases"/>
    <property type="match status" value="1"/>
</dbReference>
<dbReference type="FunFam" id="3.40.50.150:FF:000087">
    <property type="entry name" value="tRNA1(Val) (adenine(37)-N6)-methyltransferase"/>
    <property type="match status" value="1"/>
</dbReference>
<dbReference type="Gene3D" id="3.40.50.150">
    <property type="entry name" value="Vaccinia Virus protein VP39"/>
    <property type="match status" value="1"/>
</dbReference>
<dbReference type="HAMAP" id="MF_01872">
    <property type="entry name" value="tRNA_methyltr_YfiC"/>
    <property type="match status" value="1"/>
</dbReference>
<dbReference type="InterPro" id="IPR002052">
    <property type="entry name" value="DNA_methylase_N6_adenine_CS"/>
</dbReference>
<dbReference type="InterPro" id="IPR029063">
    <property type="entry name" value="SAM-dependent_MTases_sf"/>
</dbReference>
<dbReference type="InterPro" id="IPR007848">
    <property type="entry name" value="Small_mtfrase_dom"/>
</dbReference>
<dbReference type="InterPro" id="IPR050210">
    <property type="entry name" value="tRNA_Adenine-N(6)_MTase"/>
</dbReference>
<dbReference type="InterPro" id="IPR022882">
    <property type="entry name" value="tRNA_adenine-N6_MeTrfase"/>
</dbReference>
<dbReference type="NCBIfam" id="NF047853">
    <property type="entry name" value="tRm6a37MtseTrmN"/>
    <property type="match status" value="1"/>
</dbReference>
<dbReference type="PANTHER" id="PTHR47739">
    <property type="entry name" value="TRNA1(VAL) (ADENINE(37)-N6)-METHYLTRANSFERASE"/>
    <property type="match status" value="1"/>
</dbReference>
<dbReference type="PANTHER" id="PTHR47739:SF1">
    <property type="entry name" value="TRNA1(VAL) (ADENINE(37)-N6)-METHYLTRANSFERASE"/>
    <property type="match status" value="1"/>
</dbReference>
<dbReference type="Pfam" id="PF05175">
    <property type="entry name" value="MTS"/>
    <property type="match status" value="1"/>
</dbReference>
<dbReference type="SUPFAM" id="SSF53335">
    <property type="entry name" value="S-adenosyl-L-methionine-dependent methyltransferases"/>
    <property type="match status" value="1"/>
</dbReference>
<dbReference type="PROSITE" id="PS00092">
    <property type="entry name" value="N6_MTASE"/>
    <property type="match status" value="1"/>
</dbReference>
<gene>
    <name evidence="1" type="primary">yfiC</name>
    <name type="ordered locus">ECIAI1_2689</name>
</gene>
<sequence length="245" mass="27208">MSQSTSVLRRNGFTFKQFFVAHDRCAMKVGTDGILLGAWAPVAGVKRCLDIGAGSGLLALMLAQRTSDSVIIDAVELESEAAAQAQENINQSPWAERINVHTADIQQWITQQTVRFDLIISNPPYYQQGVECATPQREQARYTTTLDHPSLLTCAAECITEEGFFCVVLPEQIGNGFTELALSMGWHLRLRTDVAENEARLPHRVLLAFSPQAGECFSDRLVIRGPDQNYSEAYTALTQAFYLFM</sequence>
<feature type="chain" id="PRO_0000387375" description="tRNA1(Val) (adenine(37)-N6)-methyltransferase">
    <location>
        <begin position="1"/>
        <end position="245"/>
    </location>
</feature>
<proteinExistence type="inferred from homology"/>
<protein>
    <recommendedName>
        <fullName evidence="1">tRNA1(Val) (adenine(37)-N6)-methyltransferase</fullName>
        <ecNumber evidence="1">2.1.1.223</ecNumber>
    </recommendedName>
    <alternativeName>
        <fullName evidence="1">tRNA m6A37 methyltransferase</fullName>
    </alternativeName>
</protein>
<comment type="function">
    <text evidence="1">Specifically methylates the adenine in position 37 of tRNA(1)(Val) (anticodon cmo5UAC).</text>
</comment>
<comment type="catalytic activity">
    <reaction evidence="1">
        <text>adenosine(37) in tRNA1(Val) + S-adenosyl-L-methionine = N(6)-methyladenosine(37) in tRNA1(Val) + S-adenosyl-L-homocysteine + H(+)</text>
        <dbReference type="Rhea" id="RHEA:43160"/>
        <dbReference type="Rhea" id="RHEA-COMP:10369"/>
        <dbReference type="Rhea" id="RHEA-COMP:10370"/>
        <dbReference type="ChEBI" id="CHEBI:15378"/>
        <dbReference type="ChEBI" id="CHEBI:57856"/>
        <dbReference type="ChEBI" id="CHEBI:59789"/>
        <dbReference type="ChEBI" id="CHEBI:74411"/>
        <dbReference type="ChEBI" id="CHEBI:74449"/>
        <dbReference type="EC" id="2.1.1.223"/>
    </reaction>
</comment>
<comment type="subcellular location">
    <subcellularLocation>
        <location evidence="1">Cytoplasm</location>
    </subcellularLocation>
</comment>
<comment type="similarity">
    <text evidence="1">Belongs to the methyltransferase superfamily. tRNA (adenine-N(6)-)-methyltransferase family.</text>
</comment>
<evidence type="ECO:0000255" key="1">
    <source>
        <dbReference type="HAMAP-Rule" id="MF_01872"/>
    </source>
</evidence>
<keyword id="KW-0963">Cytoplasm</keyword>
<keyword id="KW-0489">Methyltransferase</keyword>
<keyword id="KW-0949">S-adenosyl-L-methionine</keyword>
<keyword id="KW-0808">Transferase</keyword>
<keyword id="KW-0819">tRNA processing</keyword>
<name>TRMN6_ECO8A</name>